<feature type="chain" id="PRO_1000080354" description="Large ribosomal subunit protein bL19">
    <location>
        <begin position="1"/>
        <end position="126"/>
    </location>
</feature>
<keyword id="KW-1185">Reference proteome</keyword>
<keyword id="KW-0687">Ribonucleoprotein</keyword>
<keyword id="KW-0689">Ribosomal protein</keyword>
<accession>A9HS58</accession>
<accession>B5ZL64</accession>
<comment type="function">
    <text evidence="1">This protein is located at the 30S-50S ribosomal subunit interface and may play a role in the structure and function of the aminoacyl-tRNA binding site.</text>
</comment>
<comment type="similarity">
    <text evidence="1">Belongs to the bacterial ribosomal protein bL19 family.</text>
</comment>
<name>RL19_GLUDA</name>
<protein>
    <recommendedName>
        <fullName evidence="1">Large ribosomal subunit protein bL19</fullName>
    </recommendedName>
    <alternativeName>
        <fullName evidence="2">50S ribosomal protein L19</fullName>
    </alternativeName>
</protein>
<evidence type="ECO:0000255" key="1">
    <source>
        <dbReference type="HAMAP-Rule" id="MF_00402"/>
    </source>
</evidence>
<evidence type="ECO:0000305" key="2"/>
<proteinExistence type="inferred from homology"/>
<sequence length="126" mass="14117">MNIIQQYEADEIARLSAAREVPEFGPGDTVRVSVRVVEGERKRIQAYEGVVIARSNKGLNSNFTVRKISNGEGVERVFPLYAPTIAEIKVVRRGAVRRAKLYYLRGRRGKSARIAERARETVSAEA</sequence>
<reference key="1">
    <citation type="journal article" date="2009" name="BMC Genomics">
        <title>Complete genome sequence of the sugarcane nitrogen-fixing endophyte Gluconacetobacter diazotrophicus Pal5.</title>
        <authorList>
            <person name="Bertalan M."/>
            <person name="Albano R."/>
            <person name="de Padua V."/>
            <person name="Rouws L."/>
            <person name="Rojas C."/>
            <person name="Hemerly A."/>
            <person name="Teixeira K."/>
            <person name="Schwab S."/>
            <person name="Araujo J."/>
            <person name="Oliveira A."/>
            <person name="Franca L."/>
            <person name="Magalhaes V."/>
            <person name="Alqueres S."/>
            <person name="Cardoso A."/>
            <person name="Almeida W."/>
            <person name="Loureiro M.M."/>
            <person name="Nogueira E."/>
            <person name="Cidade D."/>
            <person name="Oliveira D."/>
            <person name="Simao T."/>
            <person name="Macedo J."/>
            <person name="Valadao A."/>
            <person name="Dreschsel M."/>
            <person name="Freitas F."/>
            <person name="Vidal M."/>
            <person name="Guedes H."/>
            <person name="Rodrigues E."/>
            <person name="Meneses C."/>
            <person name="Brioso P."/>
            <person name="Pozzer L."/>
            <person name="Figueiredo D."/>
            <person name="Montano H."/>
            <person name="Junior J."/>
            <person name="de Souza Filho G."/>
            <person name="Martin Quintana Flores V."/>
            <person name="Ferreira B."/>
            <person name="Branco A."/>
            <person name="Gonzalez P."/>
            <person name="Guillobel H."/>
            <person name="Lemos M."/>
            <person name="Seibel L."/>
            <person name="Macedo J."/>
            <person name="Alves-Ferreira M."/>
            <person name="Sachetto-Martins G."/>
            <person name="Coelho A."/>
            <person name="Santos E."/>
            <person name="Amaral G."/>
            <person name="Neves A."/>
            <person name="Pacheco A.B."/>
            <person name="Carvalho D."/>
            <person name="Lery L."/>
            <person name="Bisch P."/>
            <person name="Rossle S.C."/>
            <person name="Urmenyi T."/>
            <person name="Rael Pereira A."/>
            <person name="Silva R."/>
            <person name="Rondinelli E."/>
            <person name="von Kruger W."/>
            <person name="Martins O."/>
            <person name="Baldani J.I."/>
            <person name="Ferreira P.C."/>
        </authorList>
    </citation>
    <scope>NUCLEOTIDE SEQUENCE [LARGE SCALE GENOMIC DNA]</scope>
    <source>
        <strain>ATCC 49037 / DSM 5601 / CCUG 37298 / CIP 103539 / LMG 7603 / PAl5</strain>
    </source>
</reference>
<reference key="2">
    <citation type="journal article" date="2010" name="Stand. Genomic Sci.">
        <title>Two genome sequences of the same bacterial strain, Gluconacetobacter diazotrophicus PAl 5, suggest a new standard in genome sequence submission.</title>
        <authorList>
            <person name="Giongo A."/>
            <person name="Tyler H.L."/>
            <person name="Zipperer U.N."/>
            <person name="Triplett E.W."/>
        </authorList>
    </citation>
    <scope>NUCLEOTIDE SEQUENCE [LARGE SCALE GENOMIC DNA]</scope>
    <source>
        <strain>ATCC 49037 / DSM 5601 / CCUG 37298 / CIP 103539 / LMG 7603 / PAl5</strain>
    </source>
</reference>
<dbReference type="EMBL" id="AM889285">
    <property type="protein sequence ID" value="CAP57031.1"/>
    <property type="molecule type" value="Genomic_DNA"/>
</dbReference>
<dbReference type="EMBL" id="CP001189">
    <property type="protein sequence ID" value="ACI53006.1"/>
    <property type="molecule type" value="Genomic_DNA"/>
</dbReference>
<dbReference type="RefSeq" id="WP_012227442.1">
    <property type="nucleotide sequence ID" value="NC_010125.1"/>
</dbReference>
<dbReference type="SMR" id="A9HS58"/>
<dbReference type="STRING" id="272568.GDI3088"/>
<dbReference type="KEGG" id="gdi:GDI3088"/>
<dbReference type="KEGG" id="gdj:Gdia_3279"/>
<dbReference type="eggNOG" id="COG0335">
    <property type="taxonomic scope" value="Bacteria"/>
</dbReference>
<dbReference type="HOGENOM" id="CLU_103507_2_1_5"/>
<dbReference type="OrthoDB" id="9803541at2"/>
<dbReference type="Proteomes" id="UP000001176">
    <property type="component" value="Chromosome"/>
</dbReference>
<dbReference type="GO" id="GO:0022625">
    <property type="term" value="C:cytosolic large ribosomal subunit"/>
    <property type="evidence" value="ECO:0007669"/>
    <property type="project" value="TreeGrafter"/>
</dbReference>
<dbReference type="GO" id="GO:0003735">
    <property type="term" value="F:structural constituent of ribosome"/>
    <property type="evidence" value="ECO:0007669"/>
    <property type="project" value="InterPro"/>
</dbReference>
<dbReference type="GO" id="GO:0006412">
    <property type="term" value="P:translation"/>
    <property type="evidence" value="ECO:0007669"/>
    <property type="project" value="UniProtKB-UniRule"/>
</dbReference>
<dbReference type="FunFam" id="2.30.30.790:FF:000001">
    <property type="entry name" value="50S ribosomal protein L19"/>
    <property type="match status" value="1"/>
</dbReference>
<dbReference type="Gene3D" id="2.30.30.790">
    <property type="match status" value="1"/>
</dbReference>
<dbReference type="HAMAP" id="MF_00402">
    <property type="entry name" value="Ribosomal_bL19"/>
    <property type="match status" value="1"/>
</dbReference>
<dbReference type="InterPro" id="IPR001857">
    <property type="entry name" value="Ribosomal_bL19"/>
</dbReference>
<dbReference type="InterPro" id="IPR018257">
    <property type="entry name" value="Ribosomal_bL19_CS"/>
</dbReference>
<dbReference type="InterPro" id="IPR038657">
    <property type="entry name" value="Ribosomal_bL19_sf"/>
</dbReference>
<dbReference type="InterPro" id="IPR008991">
    <property type="entry name" value="Translation_prot_SH3-like_sf"/>
</dbReference>
<dbReference type="NCBIfam" id="TIGR01024">
    <property type="entry name" value="rplS_bact"/>
    <property type="match status" value="1"/>
</dbReference>
<dbReference type="PANTHER" id="PTHR15680:SF9">
    <property type="entry name" value="LARGE RIBOSOMAL SUBUNIT PROTEIN BL19M"/>
    <property type="match status" value="1"/>
</dbReference>
<dbReference type="PANTHER" id="PTHR15680">
    <property type="entry name" value="RIBOSOMAL PROTEIN L19"/>
    <property type="match status" value="1"/>
</dbReference>
<dbReference type="Pfam" id="PF01245">
    <property type="entry name" value="Ribosomal_L19"/>
    <property type="match status" value="1"/>
</dbReference>
<dbReference type="PIRSF" id="PIRSF002191">
    <property type="entry name" value="Ribosomal_L19"/>
    <property type="match status" value="1"/>
</dbReference>
<dbReference type="PRINTS" id="PR00061">
    <property type="entry name" value="RIBOSOMALL19"/>
</dbReference>
<dbReference type="SUPFAM" id="SSF50104">
    <property type="entry name" value="Translation proteins SH3-like domain"/>
    <property type="match status" value="1"/>
</dbReference>
<dbReference type="PROSITE" id="PS01015">
    <property type="entry name" value="RIBOSOMAL_L19"/>
    <property type="match status" value="1"/>
</dbReference>
<organism>
    <name type="scientific">Gluconacetobacter diazotrophicus (strain ATCC 49037 / DSM 5601 / CCUG 37298 / CIP 103539 / LMG 7603 / PAl5)</name>
    <dbReference type="NCBI Taxonomy" id="272568"/>
    <lineage>
        <taxon>Bacteria</taxon>
        <taxon>Pseudomonadati</taxon>
        <taxon>Pseudomonadota</taxon>
        <taxon>Alphaproteobacteria</taxon>
        <taxon>Acetobacterales</taxon>
        <taxon>Acetobacteraceae</taxon>
        <taxon>Gluconacetobacter</taxon>
    </lineage>
</organism>
<gene>
    <name evidence="1" type="primary">rplS</name>
    <name type="ordered locus">GDI3088</name>
    <name type="ordered locus">Gdia_3279</name>
</gene>